<proteinExistence type="inferred from homology"/>
<sequence>MILPINIYNDEVLRATAKPLKGIDRNIRDLVASMLESMRNASGIGLAAPQVGCSIRLLVIDLSCMEKYADEKPVVVINPHLLAVKGYNAMEEGCLSLPGILGDVVRPSSITLKYRDEHFEERTGEFSGMMARVLQHEIDHLDGKLFIDRMQKRDRRKIDKELHSLAIGNVEADYPLALAGIAQKACEA</sequence>
<reference key="1">
    <citation type="submission" date="2006-12" db="EMBL/GenBank/DDBJ databases">
        <title>Complete sequence of Chlorobium phaeobacteroides DSM 266.</title>
        <authorList>
            <consortium name="US DOE Joint Genome Institute"/>
            <person name="Copeland A."/>
            <person name="Lucas S."/>
            <person name="Lapidus A."/>
            <person name="Barry K."/>
            <person name="Detter J.C."/>
            <person name="Glavina del Rio T."/>
            <person name="Hammon N."/>
            <person name="Israni S."/>
            <person name="Pitluck S."/>
            <person name="Goltsman E."/>
            <person name="Schmutz J."/>
            <person name="Larimer F."/>
            <person name="Land M."/>
            <person name="Hauser L."/>
            <person name="Mikhailova N."/>
            <person name="Li T."/>
            <person name="Overmann J."/>
            <person name="Bryant D.A."/>
            <person name="Richardson P."/>
        </authorList>
    </citation>
    <scope>NUCLEOTIDE SEQUENCE [LARGE SCALE GENOMIC DNA]</scope>
    <source>
        <strain>DSM 266 / SMG 266 / 2430</strain>
    </source>
</reference>
<feature type="chain" id="PRO_0000301019" description="Peptide deformylase">
    <location>
        <begin position="1"/>
        <end position="188"/>
    </location>
</feature>
<feature type="active site" evidence="1">
    <location>
        <position position="137"/>
    </location>
</feature>
<feature type="binding site" evidence="1">
    <location>
        <position position="94"/>
    </location>
    <ligand>
        <name>Fe cation</name>
        <dbReference type="ChEBI" id="CHEBI:24875"/>
    </ligand>
</feature>
<feature type="binding site" evidence="1">
    <location>
        <position position="136"/>
    </location>
    <ligand>
        <name>Fe cation</name>
        <dbReference type="ChEBI" id="CHEBI:24875"/>
    </ligand>
</feature>
<feature type="binding site" evidence="1">
    <location>
        <position position="140"/>
    </location>
    <ligand>
        <name>Fe cation</name>
        <dbReference type="ChEBI" id="CHEBI:24875"/>
    </ligand>
</feature>
<protein>
    <recommendedName>
        <fullName evidence="1">Peptide deformylase</fullName>
        <shortName evidence="1">PDF</shortName>
        <ecNumber evidence="1">3.5.1.88</ecNumber>
    </recommendedName>
    <alternativeName>
        <fullName evidence="1">Polypeptide deformylase</fullName>
    </alternativeName>
</protein>
<gene>
    <name evidence="1" type="primary">def</name>
    <name type="ordered locus">Cpha266_1861</name>
</gene>
<name>DEF_CHLPD</name>
<organism>
    <name type="scientific">Chlorobium phaeobacteroides (strain DSM 266 / SMG 266 / 2430)</name>
    <dbReference type="NCBI Taxonomy" id="290317"/>
    <lineage>
        <taxon>Bacteria</taxon>
        <taxon>Pseudomonadati</taxon>
        <taxon>Chlorobiota</taxon>
        <taxon>Chlorobiia</taxon>
        <taxon>Chlorobiales</taxon>
        <taxon>Chlorobiaceae</taxon>
        <taxon>Chlorobium/Pelodictyon group</taxon>
        <taxon>Chlorobium</taxon>
    </lineage>
</organism>
<evidence type="ECO:0000255" key="1">
    <source>
        <dbReference type="HAMAP-Rule" id="MF_00163"/>
    </source>
</evidence>
<accession>A1BHK0</accession>
<keyword id="KW-0378">Hydrolase</keyword>
<keyword id="KW-0408">Iron</keyword>
<keyword id="KW-0479">Metal-binding</keyword>
<keyword id="KW-0648">Protein biosynthesis</keyword>
<keyword id="KW-1185">Reference proteome</keyword>
<dbReference type="EC" id="3.5.1.88" evidence="1"/>
<dbReference type="EMBL" id="CP000492">
    <property type="protein sequence ID" value="ABL65877.1"/>
    <property type="molecule type" value="Genomic_DNA"/>
</dbReference>
<dbReference type="RefSeq" id="WP_011745684.1">
    <property type="nucleotide sequence ID" value="NC_008639.1"/>
</dbReference>
<dbReference type="SMR" id="A1BHK0"/>
<dbReference type="STRING" id="290317.Cpha266_1861"/>
<dbReference type="KEGG" id="cph:Cpha266_1861"/>
<dbReference type="eggNOG" id="COG0242">
    <property type="taxonomic scope" value="Bacteria"/>
</dbReference>
<dbReference type="HOGENOM" id="CLU_061901_2_0_10"/>
<dbReference type="OrthoDB" id="9784988at2"/>
<dbReference type="Proteomes" id="UP000008701">
    <property type="component" value="Chromosome"/>
</dbReference>
<dbReference type="GO" id="GO:0046872">
    <property type="term" value="F:metal ion binding"/>
    <property type="evidence" value="ECO:0007669"/>
    <property type="project" value="UniProtKB-KW"/>
</dbReference>
<dbReference type="GO" id="GO:0042586">
    <property type="term" value="F:peptide deformylase activity"/>
    <property type="evidence" value="ECO:0007669"/>
    <property type="project" value="UniProtKB-UniRule"/>
</dbReference>
<dbReference type="GO" id="GO:0043686">
    <property type="term" value="P:co-translational protein modification"/>
    <property type="evidence" value="ECO:0007669"/>
    <property type="project" value="TreeGrafter"/>
</dbReference>
<dbReference type="GO" id="GO:0006412">
    <property type="term" value="P:translation"/>
    <property type="evidence" value="ECO:0007669"/>
    <property type="project" value="UniProtKB-UniRule"/>
</dbReference>
<dbReference type="CDD" id="cd00487">
    <property type="entry name" value="Pep_deformylase"/>
    <property type="match status" value="1"/>
</dbReference>
<dbReference type="Gene3D" id="3.90.45.10">
    <property type="entry name" value="Peptide deformylase"/>
    <property type="match status" value="1"/>
</dbReference>
<dbReference type="HAMAP" id="MF_00163">
    <property type="entry name" value="Pep_deformylase"/>
    <property type="match status" value="1"/>
</dbReference>
<dbReference type="InterPro" id="IPR023635">
    <property type="entry name" value="Peptide_deformylase"/>
</dbReference>
<dbReference type="InterPro" id="IPR036821">
    <property type="entry name" value="Peptide_deformylase_sf"/>
</dbReference>
<dbReference type="NCBIfam" id="TIGR00079">
    <property type="entry name" value="pept_deformyl"/>
    <property type="match status" value="1"/>
</dbReference>
<dbReference type="NCBIfam" id="NF001159">
    <property type="entry name" value="PRK00150.1-3"/>
    <property type="match status" value="1"/>
</dbReference>
<dbReference type="PANTHER" id="PTHR10458">
    <property type="entry name" value="PEPTIDE DEFORMYLASE"/>
    <property type="match status" value="1"/>
</dbReference>
<dbReference type="PANTHER" id="PTHR10458:SF22">
    <property type="entry name" value="PEPTIDE DEFORMYLASE"/>
    <property type="match status" value="1"/>
</dbReference>
<dbReference type="Pfam" id="PF01327">
    <property type="entry name" value="Pep_deformylase"/>
    <property type="match status" value="1"/>
</dbReference>
<dbReference type="PIRSF" id="PIRSF004749">
    <property type="entry name" value="Pep_def"/>
    <property type="match status" value="1"/>
</dbReference>
<dbReference type="PRINTS" id="PR01576">
    <property type="entry name" value="PDEFORMYLASE"/>
</dbReference>
<dbReference type="SUPFAM" id="SSF56420">
    <property type="entry name" value="Peptide deformylase"/>
    <property type="match status" value="1"/>
</dbReference>
<comment type="function">
    <text evidence="1">Removes the formyl group from the N-terminal Met of newly synthesized proteins. Requires at least a dipeptide for an efficient rate of reaction. N-terminal L-methionine is a prerequisite for activity but the enzyme has broad specificity at other positions.</text>
</comment>
<comment type="catalytic activity">
    <reaction evidence="1">
        <text>N-terminal N-formyl-L-methionyl-[peptide] + H2O = N-terminal L-methionyl-[peptide] + formate</text>
        <dbReference type="Rhea" id="RHEA:24420"/>
        <dbReference type="Rhea" id="RHEA-COMP:10639"/>
        <dbReference type="Rhea" id="RHEA-COMP:10640"/>
        <dbReference type="ChEBI" id="CHEBI:15377"/>
        <dbReference type="ChEBI" id="CHEBI:15740"/>
        <dbReference type="ChEBI" id="CHEBI:49298"/>
        <dbReference type="ChEBI" id="CHEBI:64731"/>
        <dbReference type="EC" id="3.5.1.88"/>
    </reaction>
</comment>
<comment type="cofactor">
    <cofactor evidence="1">
        <name>Fe(2+)</name>
        <dbReference type="ChEBI" id="CHEBI:29033"/>
    </cofactor>
    <text evidence="1">Binds 1 Fe(2+) ion.</text>
</comment>
<comment type="similarity">
    <text evidence="1">Belongs to the polypeptide deformylase family.</text>
</comment>